<keyword id="KW-0539">Nucleus</keyword>
<keyword id="KW-1185">Reference proteome</keyword>
<keyword id="KW-0694">RNA-binding</keyword>
<protein>
    <recommendedName>
        <fullName>RNA-binding protein PNO1</fullName>
    </recommendedName>
</protein>
<reference key="1">
    <citation type="journal article" date="2004" name="DNA Seq.">
        <title>Cloning and characterization of a novel human RNA binding protein gene PNO1.</title>
        <authorList>
            <person name="Zhou G.-J."/>
            <person name="Zhang Y."/>
            <person name="Wang J."/>
            <person name="Guo J.H."/>
            <person name="Ni J."/>
            <person name="Zhong Z.-M."/>
            <person name="Wang L.-Q."/>
            <person name="Dang Y.-J."/>
            <person name="Dai J.F."/>
            <person name="Yu L."/>
        </authorList>
    </citation>
    <scope>NUCLEOTIDE SEQUENCE [MRNA]</scope>
</reference>
<reference key="2">
    <citation type="submission" date="2003-01" db="EMBL/GenBank/DDBJ databases">
        <authorList>
            <consortium name="NIH - Xenopus Gene Collection (XGC) project"/>
        </authorList>
    </citation>
    <scope>NUCLEOTIDE SEQUENCE [LARGE SCALE MRNA]</scope>
    <source>
        <tissue>Embryo</tissue>
    </source>
</reference>
<sequence length="236" mass="26366">MEIESAATSGESFTSVTSKKSRKRRAAEERPMDMGEQPSKRPDFPPISGDKLMGDKDEMRKIPVPSHRYTPLKENWMKIFTPIVEHLQLQVRFNLKSRNVEIKTCKETTDVGALTKAADFVRAFILGFQVEDALALVRLDDLFLESFEVTDVKPLKGDHLSRAIGRIAGKGGKTKFTIENVTKTRIVLADSKIHIMGSFQNIKMARTAICNLILGSPPSKVYGNIRAVASRAADRF</sequence>
<dbReference type="EMBL" id="BC042279">
    <property type="protein sequence ID" value="AAH42279.1"/>
    <property type="molecule type" value="mRNA"/>
</dbReference>
<dbReference type="EMBL" id="AY341885">
    <property type="protein sequence ID" value="AAQ24169.1"/>
    <property type="molecule type" value="mRNA"/>
</dbReference>
<dbReference type="RefSeq" id="NP_001079442.1">
    <property type="nucleotide sequence ID" value="NM_001085973.2"/>
</dbReference>
<dbReference type="SMR" id="Q8AVH4"/>
<dbReference type="DNASU" id="379129"/>
<dbReference type="GeneID" id="379129"/>
<dbReference type="KEGG" id="xla:379129"/>
<dbReference type="AGR" id="Xenbase:XB-GENE-866051"/>
<dbReference type="CTD" id="379129"/>
<dbReference type="Xenbase" id="XB-GENE-866051">
    <property type="gene designation" value="pno1.L"/>
</dbReference>
<dbReference type="OMA" id="TPLRNNW"/>
<dbReference type="OrthoDB" id="1932641at2759"/>
<dbReference type="Proteomes" id="UP000186698">
    <property type="component" value="Chromosome 5L"/>
</dbReference>
<dbReference type="Bgee" id="379129">
    <property type="expression patterns" value="Expressed in pancreas and 19 other cell types or tissues"/>
</dbReference>
<dbReference type="GO" id="GO:0005730">
    <property type="term" value="C:nucleolus"/>
    <property type="evidence" value="ECO:0000250"/>
    <property type="project" value="UniProtKB"/>
</dbReference>
<dbReference type="GO" id="GO:0005634">
    <property type="term" value="C:nucleus"/>
    <property type="evidence" value="ECO:0000318"/>
    <property type="project" value="GO_Central"/>
</dbReference>
<dbReference type="GO" id="GO:0032040">
    <property type="term" value="C:small-subunit processome"/>
    <property type="evidence" value="ECO:0000250"/>
    <property type="project" value="UniProtKB"/>
</dbReference>
<dbReference type="GO" id="GO:0003723">
    <property type="term" value="F:RNA binding"/>
    <property type="evidence" value="ECO:0007669"/>
    <property type="project" value="UniProtKB-KW"/>
</dbReference>
<dbReference type="GO" id="GO:0042274">
    <property type="term" value="P:ribosomal small subunit biogenesis"/>
    <property type="evidence" value="ECO:0000250"/>
    <property type="project" value="UniProtKB"/>
</dbReference>
<dbReference type="CDD" id="cd22391">
    <property type="entry name" value="KH-I_PNO1_rpt1"/>
    <property type="match status" value="1"/>
</dbReference>
<dbReference type="CDD" id="cd22392">
    <property type="entry name" value="KH-I_PNO1_rpt2"/>
    <property type="match status" value="1"/>
</dbReference>
<dbReference type="FunFam" id="3.30.1370.10:FF:000009">
    <property type="entry name" value="RNA-binding protein PNO1"/>
    <property type="match status" value="1"/>
</dbReference>
<dbReference type="FunFam" id="3.30.1370.10:FF:000048">
    <property type="entry name" value="RNA-binding protein PNO1 isoform X2"/>
    <property type="match status" value="1"/>
</dbReference>
<dbReference type="Gene3D" id="3.30.1370.10">
    <property type="entry name" value="K Homology domain, type 1"/>
    <property type="match status" value="2"/>
</dbReference>
<dbReference type="InterPro" id="IPR055212">
    <property type="entry name" value="KH-I_PNO1_first"/>
</dbReference>
<dbReference type="InterPro" id="IPR004087">
    <property type="entry name" value="KH_dom"/>
</dbReference>
<dbReference type="InterPro" id="IPR036612">
    <property type="entry name" value="KH_dom_type_1_sf"/>
</dbReference>
<dbReference type="InterPro" id="IPR055211">
    <property type="entry name" value="KH_PNO1_2nd"/>
</dbReference>
<dbReference type="InterPro" id="IPR041174">
    <property type="entry name" value="KRR1-like_KH1"/>
</dbReference>
<dbReference type="PANTHER" id="PTHR12826">
    <property type="entry name" value="RIBONUCLEASE Y"/>
    <property type="match status" value="1"/>
</dbReference>
<dbReference type="PANTHER" id="PTHR12826:SF13">
    <property type="entry name" value="RNA-BINDING PROTEIN PNO1"/>
    <property type="match status" value="1"/>
</dbReference>
<dbReference type="Pfam" id="PF17903">
    <property type="entry name" value="KH_KRR1_1st"/>
    <property type="match status" value="1"/>
</dbReference>
<dbReference type="Pfam" id="PF22891">
    <property type="entry name" value="KH_PNO1_2nd"/>
    <property type="match status" value="1"/>
</dbReference>
<dbReference type="SMART" id="SM00322">
    <property type="entry name" value="KH"/>
    <property type="match status" value="1"/>
</dbReference>
<dbReference type="SUPFAM" id="SSF54791">
    <property type="entry name" value="Eukaryotic type KH-domain (KH-domain type I)"/>
    <property type="match status" value="1"/>
</dbReference>
<proteinExistence type="evidence at transcript level"/>
<name>PNO1_XENLA</name>
<gene>
    <name type="primary">pno1</name>
</gene>
<feature type="chain" id="PRO_0000270546" description="RNA-binding protein PNO1">
    <location>
        <begin position="1"/>
        <end position="236"/>
    </location>
</feature>
<feature type="domain" description="KH">
    <location>
        <begin position="152"/>
        <end position="209"/>
    </location>
</feature>
<feature type="region of interest" description="Disordered" evidence="2">
    <location>
        <begin position="1"/>
        <end position="65"/>
    </location>
</feature>
<feature type="compositionally biased region" description="Polar residues" evidence="2">
    <location>
        <begin position="1"/>
        <end position="17"/>
    </location>
</feature>
<feature type="compositionally biased region" description="Basic and acidic residues" evidence="2">
    <location>
        <begin position="26"/>
        <end position="43"/>
    </location>
</feature>
<feature type="compositionally biased region" description="Basic and acidic residues" evidence="2">
    <location>
        <begin position="52"/>
        <end position="61"/>
    </location>
</feature>
<organism>
    <name type="scientific">Xenopus laevis</name>
    <name type="common">African clawed frog</name>
    <dbReference type="NCBI Taxonomy" id="8355"/>
    <lineage>
        <taxon>Eukaryota</taxon>
        <taxon>Metazoa</taxon>
        <taxon>Chordata</taxon>
        <taxon>Craniata</taxon>
        <taxon>Vertebrata</taxon>
        <taxon>Euteleostomi</taxon>
        <taxon>Amphibia</taxon>
        <taxon>Batrachia</taxon>
        <taxon>Anura</taxon>
        <taxon>Pipoidea</taxon>
        <taxon>Pipidae</taxon>
        <taxon>Xenopodinae</taxon>
        <taxon>Xenopus</taxon>
        <taxon>Xenopus</taxon>
    </lineage>
</organism>
<accession>Q8AVH4</accession>
<comment type="function">
    <text evidence="1">Part of the small subunit (SSU) processome, first precursor of the small eukaryotic ribosomal subunit. During the assembly of the SSU processome in the nucleolus, many ribosome biogenesis factors, an RNA chaperone and ribosomal proteins associate with the nascent pre-rRNA and work in concert to generate RNA folding, modifications, rearrangements and cleavage as well as targeted degradation of pre-ribosomal RNA by the RNA exosome. Positively regulates dimethylation of two adjacent adenosines in the loop of a conserved hairpin near the 3'-end of 18S rRNA.</text>
</comment>
<comment type="subunit">
    <text evidence="1">Part of the small subunit (SSU) processome, composed of more than 70 proteins and the RNA chaperone small nucleolar RNA (snoRNA) U3.</text>
</comment>
<comment type="subcellular location">
    <subcellularLocation>
        <location evidence="1">Nucleus</location>
        <location evidence="1">Nucleolus</location>
    </subcellularLocation>
</comment>
<comment type="similarity">
    <text evidence="3">Belongs to the PNO1 family.</text>
</comment>
<evidence type="ECO:0000250" key="1">
    <source>
        <dbReference type="UniProtKB" id="Q9NRX1"/>
    </source>
</evidence>
<evidence type="ECO:0000256" key="2">
    <source>
        <dbReference type="SAM" id="MobiDB-lite"/>
    </source>
</evidence>
<evidence type="ECO:0000305" key="3"/>